<comment type="function">
    <text evidence="1">Catalyzes a mechanistically unusual reaction, the ATP-dependent insertion of CO2 between the N7 and N8 nitrogen atoms of 7,8-diaminopelargonic acid (DAPA, also called 7,8-diammoniononanoate) to form a ureido ring.</text>
</comment>
<comment type="catalytic activity">
    <reaction evidence="1">
        <text>(7R,8S)-7,8-diammoniononanoate + CO2 + ATP = (4R,5S)-dethiobiotin + ADP + phosphate + 3 H(+)</text>
        <dbReference type="Rhea" id="RHEA:15805"/>
        <dbReference type="ChEBI" id="CHEBI:15378"/>
        <dbReference type="ChEBI" id="CHEBI:16526"/>
        <dbReference type="ChEBI" id="CHEBI:30616"/>
        <dbReference type="ChEBI" id="CHEBI:43474"/>
        <dbReference type="ChEBI" id="CHEBI:149469"/>
        <dbReference type="ChEBI" id="CHEBI:149473"/>
        <dbReference type="ChEBI" id="CHEBI:456216"/>
        <dbReference type="EC" id="6.3.3.3"/>
    </reaction>
</comment>
<comment type="cofactor">
    <cofactor evidence="1">
        <name>Mg(2+)</name>
        <dbReference type="ChEBI" id="CHEBI:18420"/>
    </cofactor>
</comment>
<comment type="pathway">
    <text evidence="1">Cofactor biosynthesis; biotin biosynthesis; biotin from 7,8-diaminononanoate: step 1/2.</text>
</comment>
<comment type="subunit">
    <text evidence="1">Homodimer.</text>
</comment>
<comment type="subcellular location">
    <subcellularLocation>
        <location evidence="1">Cytoplasm</location>
    </subcellularLocation>
</comment>
<comment type="similarity">
    <text evidence="1">Belongs to the dethiobiotin synthetase family.</text>
</comment>
<feature type="chain" id="PRO_1000019555" description="ATP-dependent dethiobiotin synthetase BioD">
    <location>
        <begin position="1"/>
        <end position="243"/>
    </location>
</feature>
<feature type="active site" evidence="1">
    <location>
        <position position="37"/>
    </location>
</feature>
<feature type="binding site" evidence="1">
    <location>
        <begin position="12"/>
        <end position="17"/>
    </location>
    <ligand>
        <name>ATP</name>
        <dbReference type="ChEBI" id="CHEBI:30616"/>
    </ligand>
</feature>
<feature type="binding site" evidence="1">
    <location>
        <position position="16"/>
    </location>
    <ligand>
        <name>Mg(2+)</name>
        <dbReference type="ChEBI" id="CHEBI:18420"/>
    </ligand>
</feature>
<feature type="binding site" evidence="1">
    <location>
        <position position="41"/>
    </location>
    <ligand>
        <name>substrate</name>
    </ligand>
</feature>
<feature type="binding site" evidence="1">
    <location>
        <position position="54"/>
    </location>
    <ligand>
        <name>ATP</name>
        <dbReference type="ChEBI" id="CHEBI:30616"/>
    </ligand>
</feature>
<feature type="binding site" evidence="1">
    <location>
        <position position="54"/>
    </location>
    <ligand>
        <name>Mg(2+)</name>
        <dbReference type="ChEBI" id="CHEBI:18420"/>
    </ligand>
</feature>
<feature type="binding site" evidence="1">
    <location>
        <begin position="115"/>
        <end position="118"/>
    </location>
    <ligand>
        <name>ATP</name>
        <dbReference type="ChEBI" id="CHEBI:30616"/>
    </ligand>
</feature>
<feature type="binding site" evidence="1">
    <location>
        <position position="115"/>
    </location>
    <ligand>
        <name>Mg(2+)</name>
        <dbReference type="ChEBI" id="CHEBI:18420"/>
    </ligand>
</feature>
<feature type="binding site" evidence="1">
    <location>
        <begin position="179"/>
        <end position="180"/>
    </location>
    <ligand>
        <name>ATP</name>
        <dbReference type="ChEBI" id="CHEBI:30616"/>
    </ligand>
</feature>
<organism>
    <name type="scientific">Caldicellulosiruptor saccharolyticus (strain ATCC 43494 / DSM 8903 / Tp8T 6331)</name>
    <dbReference type="NCBI Taxonomy" id="351627"/>
    <lineage>
        <taxon>Bacteria</taxon>
        <taxon>Bacillati</taxon>
        <taxon>Bacillota</taxon>
        <taxon>Bacillota incertae sedis</taxon>
        <taxon>Caldicellulosiruptorales</taxon>
        <taxon>Caldicellulosiruptoraceae</taxon>
        <taxon>Caldicellulosiruptor</taxon>
    </lineage>
</organism>
<name>BIOD_CALS8</name>
<evidence type="ECO:0000255" key="1">
    <source>
        <dbReference type="HAMAP-Rule" id="MF_00336"/>
    </source>
</evidence>
<keyword id="KW-0067">ATP-binding</keyword>
<keyword id="KW-0093">Biotin biosynthesis</keyword>
<keyword id="KW-0963">Cytoplasm</keyword>
<keyword id="KW-0436">Ligase</keyword>
<keyword id="KW-0460">Magnesium</keyword>
<keyword id="KW-0479">Metal-binding</keyword>
<keyword id="KW-0547">Nucleotide-binding</keyword>
<dbReference type="EC" id="6.3.3.3" evidence="1"/>
<dbReference type="EMBL" id="CP000679">
    <property type="protein sequence ID" value="ABP65951.1"/>
    <property type="molecule type" value="Genomic_DNA"/>
</dbReference>
<dbReference type="RefSeq" id="WP_011915914.1">
    <property type="nucleotide sequence ID" value="NC_009437.1"/>
</dbReference>
<dbReference type="SMR" id="A4XGB6"/>
<dbReference type="STRING" id="351627.Csac_0305"/>
<dbReference type="KEGG" id="csc:Csac_0305"/>
<dbReference type="eggNOG" id="COG0132">
    <property type="taxonomic scope" value="Bacteria"/>
</dbReference>
<dbReference type="HOGENOM" id="CLU_072551_3_0_9"/>
<dbReference type="OrthoDB" id="9802097at2"/>
<dbReference type="UniPathway" id="UPA00078">
    <property type="reaction ID" value="UER00161"/>
</dbReference>
<dbReference type="Proteomes" id="UP000000256">
    <property type="component" value="Chromosome"/>
</dbReference>
<dbReference type="GO" id="GO:0005829">
    <property type="term" value="C:cytosol"/>
    <property type="evidence" value="ECO:0007669"/>
    <property type="project" value="TreeGrafter"/>
</dbReference>
<dbReference type="GO" id="GO:0005524">
    <property type="term" value="F:ATP binding"/>
    <property type="evidence" value="ECO:0007669"/>
    <property type="project" value="UniProtKB-UniRule"/>
</dbReference>
<dbReference type="GO" id="GO:0004141">
    <property type="term" value="F:dethiobiotin synthase activity"/>
    <property type="evidence" value="ECO:0007669"/>
    <property type="project" value="UniProtKB-UniRule"/>
</dbReference>
<dbReference type="GO" id="GO:0000287">
    <property type="term" value="F:magnesium ion binding"/>
    <property type="evidence" value="ECO:0007669"/>
    <property type="project" value="UniProtKB-UniRule"/>
</dbReference>
<dbReference type="GO" id="GO:0009102">
    <property type="term" value="P:biotin biosynthetic process"/>
    <property type="evidence" value="ECO:0007669"/>
    <property type="project" value="UniProtKB-UniRule"/>
</dbReference>
<dbReference type="CDD" id="cd03109">
    <property type="entry name" value="DTBS"/>
    <property type="match status" value="1"/>
</dbReference>
<dbReference type="FunFam" id="3.40.50.300:FF:000292">
    <property type="entry name" value="ATP-dependent dethiobiotin synthetase BioD"/>
    <property type="match status" value="1"/>
</dbReference>
<dbReference type="Gene3D" id="3.40.50.300">
    <property type="entry name" value="P-loop containing nucleotide triphosphate hydrolases"/>
    <property type="match status" value="1"/>
</dbReference>
<dbReference type="HAMAP" id="MF_00336">
    <property type="entry name" value="BioD"/>
    <property type="match status" value="1"/>
</dbReference>
<dbReference type="InterPro" id="IPR004472">
    <property type="entry name" value="DTB_synth_BioD"/>
</dbReference>
<dbReference type="InterPro" id="IPR027417">
    <property type="entry name" value="P-loop_NTPase"/>
</dbReference>
<dbReference type="NCBIfam" id="TIGR00347">
    <property type="entry name" value="bioD"/>
    <property type="match status" value="1"/>
</dbReference>
<dbReference type="PANTHER" id="PTHR43210">
    <property type="entry name" value="DETHIOBIOTIN SYNTHETASE"/>
    <property type="match status" value="1"/>
</dbReference>
<dbReference type="PANTHER" id="PTHR43210:SF5">
    <property type="entry name" value="DETHIOBIOTIN SYNTHETASE"/>
    <property type="match status" value="1"/>
</dbReference>
<dbReference type="Pfam" id="PF13500">
    <property type="entry name" value="AAA_26"/>
    <property type="match status" value="1"/>
</dbReference>
<dbReference type="PIRSF" id="PIRSF006755">
    <property type="entry name" value="DTB_synth"/>
    <property type="match status" value="1"/>
</dbReference>
<dbReference type="SUPFAM" id="SSF52540">
    <property type="entry name" value="P-loop containing nucleoside triphosphate hydrolases"/>
    <property type="match status" value="1"/>
</dbReference>
<accession>A4XGB6</accession>
<proteinExistence type="inferred from homology"/>
<sequence>MKAVYIIGTDTDVGKTLICAGLCWALKEKGYNIGYFKPVLSGAKRRGKMLIPQDTEFVVNFAKIKGDIYRLTPFIFEKPASPHIAASDENVDINVNQIKQTFEDLSQNYEFVIIEGCGGLAVPLKEERNQFYMQYQLIKEICNNVILVTTTKLGTINHTLLTVEFAKAYGLCLKGIIVNMYKNEPDEDKVINTITKFTNIPILAKVDFINDFPSDVDENKFKNVFKKCFDDRAIRKIMGVFEC</sequence>
<reference key="1">
    <citation type="submission" date="2007-04" db="EMBL/GenBank/DDBJ databases">
        <title>Genome sequence of the thermophilic hydrogen-producing bacterium Caldicellulosiruptor saccharolyticus DSM 8903.</title>
        <authorList>
            <person name="Copeland A."/>
            <person name="Lucas S."/>
            <person name="Lapidus A."/>
            <person name="Barry K."/>
            <person name="Detter J.C."/>
            <person name="Glavina del Rio T."/>
            <person name="Hammon N."/>
            <person name="Israni S."/>
            <person name="Dalin E."/>
            <person name="Tice H."/>
            <person name="Pitluck S."/>
            <person name="Kiss H."/>
            <person name="Brettin T."/>
            <person name="Bruce D."/>
            <person name="Han C."/>
            <person name="Schmutz J."/>
            <person name="Larimer F."/>
            <person name="Land M."/>
            <person name="Hauser L."/>
            <person name="Kyrpides N."/>
            <person name="Lykidis A."/>
            <person name="van de Werken H.J.G."/>
            <person name="Verhaart M.R.A."/>
            <person name="VanFossen A.L."/>
            <person name="Lewis D.L."/>
            <person name="Nichols J.D."/>
            <person name="Goorissen H.P."/>
            <person name="van Niel E.W.J."/>
            <person name="Stams F.J.M."/>
            <person name="Willquist K.U."/>
            <person name="Ward D.E."/>
            <person name="van der Oost J."/>
            <person name="Kelly R.M."/>
            <person name="Kengen S.M.W."/>
            <person name="Richardson P."/>
        </authorList>
    </citation>
    <scope>NUCLEOTIDE SEQUENCE [LARGE SCALE GENOMIC DNA]</scope>
    <source>
        <strain>ATCC 43494 / DSM 8903 / Tp8T 6331</strain>
    </source>
</reference>
<gene>
    <name evidence="1" type="primary">bioD</name>
    <name type="ordered locus">Csac_0305</name>
</gene>
<protein>
    <recommendedName>
        <fullName evidence="1">ATP-dependent dethiobiotin synthetase BioD</fullName>
        <ecNumber evidence="1">6.3.3.3</ecNumber>
    </recommendedName>
    <alternativeName>
        <fullName evidence="1">DTB synthetase</fullName>
        <shortName evidence="1">DTBS</shortName>
    </alternativeName>
    <alternativeName>
        <fullName evidence="1">Dethiobiotin synthase</fullName>
    </alternativeName>
</protein>